<keyword id="KW-1185">Reference proteome</keyword>
<keyword id="KW-0687">Ribonucleoprotein</keyword>
<keyword id="KW-0689">Ribosomal protein</keyword>
<keyword id="KW-0694">RNA-binding</keyword>
<keyword id="KW-0699">rRNA-binding</keyword>
<dbReference type="EMBL" id="AF126060">
    <property type="protein sequence ID" value="AAD33269.1"/>
    <property type="molecule type" value="Genomic_DNA"/>
</dbReference>
<dbReference type="EMBL" id="AF126061">
    <property type="protein sequence ID" value="AAD33278.1"/>
    <property type="molecule type" value="Genomic_DNA"/>
</dbReference>
<dbReference type="EMBL" id="AE005672">
    <property type="protein sequence ID" value="AAK74393.1"/>
    <property type="molecule type" value="Genomic_DNA"/>
</dbReference>
<dbReference type="PIR" id="H95024">
    <property type="entry name" value="H95024"/>
</dbReference>
<dbReference type="RefSeq" id="WP_000533766.1">
    <property type="nucleotide sequence ID" value="NZ_CP155539.1"/>
</dbReference>
<dbReference type="SMR" id="P0A4B5"/>
<dbReference type="PaxDb" id="170187-SP_0213"/>
<dbReference type="EnsemblBacteria" id="AAK74393">
    <property type="protein sequence ID" value="AAK74393"/>
    <property type="gene ID" value="SP_0213"/>
</dbReference>
<dbReference type="GeneID" id="93920908"/>
<dbReference type="KEGG" id="spn:SP_0213"/>
<dbReference type="eggNOG" id="COG0185">
    <property type="taxonomic scope" value="Bacteria"/>
</dbReference>
<dbReference type="PhylomeDB" id="P0A4B5"/>
<dbReference type="BioCyc" id="SPNE170187:G1FZB-218-MONOMER"/>
<dbReference type="Proteomes" id="UP000000585">
    <property type="component" value="Chromosome"/>
</dbReference>
<dbReference type="GO" id="GO:0005737">
    <property type="term" value="C:cytoplasm"/>
    <property type="evidence" value="ECO:0007669"/>
    <property type="project" value="UniProtKB-ARBA"/>
</dbReference>
<dbReference type="GO" id="GO:0015935">
    <property type="term" value="C:small ribosomal subunit"/>
    <property type="evidence" value="ECO:0007669"/>
    <property type="project" value="InterPro"/>
</dbReference>
<dbReference type="GO" id="GO:0019843">
    <property type="term" value="F:rRNA binding"/>
    <property type="evidence" value="ECO:0007669"/>
    <property type="project" value="UniProtKB-UniRule"/>
</dbReference>
<dbReference type="GO" id="GO:0003735">
    <property type="term" value="F:structural constituent of ribosome"/>
    <property type="evidence" value="ECO:0007669"/>
    <property type="project" value="InterPro"/>
</dbReference>
<dbReference type="GO" id="GO:0000028">
    <property type="term" value="P:ribosomal small subunit assembly"/>
    <property type="evidence" value="ECO:0007669"/>
    <property type="project" value="TreeGrafter"/>
</dbReference>
<dbReference type="GO" id="GO:0006412">
    <property type="term" value="P:translation"/>
    <property type="evidence" value="ECO:0007669"/>
    <property type="project" value="UniProtKB-UniRule"/>
</dbReference>
<dbReference type="FunFam" id="3.30.860.10:FF:000001">
    <property type="entry name" value="30S ribosomal protein S19"/>
    <property type="match status" value="1"/>
</dbReference>
<dbReference type="Gene3D" id="3.30.860.10">
    <property type="entry name" value="30s Ribosomal Protein S19, Chain A"/>
    <property type="match status" value="1"/>
</dbReference>
<dbReference type="HAMAP" id="MF_00531">
    <property type="entry name" value="Ribosomal_uS19"/>
    <property type="match status" value="1"/>
</dbReference>
<dbReference type="InterPro" id="IPR002222">
    <property type="entry name" value="Ribosomal_uS19"/>
</dbReference>
<dbReference type="InterPro" id="IPR005732">
    <property type="entry name" value="Ribosomal_uS19_bac-type"/>
</dbReference>
<dbReference type="InterPro" id="IPR020934">
    <property type="entry name" value="Ribosomal_uS19_CS"/>
</dbReference>
<dbReference type="InterPro" id="IPR023575">
    <property type="entry name" value="Ribosomal_uS19_SF"/>
</dbReference>
<dbReference type="NCBIfam" id="TIGR01050">
    <property type="entry name" value="rpsS_bact"/>
    <property type="match status" value="1"/>
</dbReference>
<dbReference type="PANTHER" id="PTHR11880">
    <property type="entry name" value="RIBOSOMAL PROTEIN S19P FAMILY MEMBER"/>
    <property type="match status" value="1"/>
</dbReference>
<dbReference type="PANTHER" id="PTHR11880:SF8">
    <property type="entry name" value="SMALL RIBOSOMAL SUBUNIT PROTEIN US19M"/>
    <property type="match status" value="1"/>
</dbReference>
<dbReference type="Pfam" id="PF00203">
    <property type="entry name" value="Ribosomal_S19"/>
    <property type="match status" value="1"/>
</dbReference>
<dbReference type="PIRSF" id="PIRSF002144">
    <property type="entry name" value="Ribosomal_S19"/>
    <property type="match status" value="1"/>
</dbReference>
<dbReference type="PRINTS" id="PR00975">
    <property type="entry name" value="RIBOSOMALS19"/>
</dbReference>
<dbReference type="SUPFAM" id="SSF54570">
    <property type="entry name" value="Ribosomal protein S19"/>
    <property type="match status" value="1"/>
</dbReference>
<dbReference type="PROSITE" id="PS00323">
    <property type="entry name" value="RIBOSOMAL_S19"/>
    <property type="match status" value="1"/>
</dbReference>
<protein>
    <recommendedName>
        <fullName evidence="2">Small ribosomal subunit protein uS19</fullName>
    </recommendedName>
    <alternativeName>
        <fullName>30S ribosomal protein S19</fullName>
    </alternativeName>
</protein>
<feature type="chain" id="PRO_0000129912" description="Small ribosomal subunit protein uS19">
    <location>
        <begin position="1"/>
        <end position="93"/>
    </location>
</feature>
<sequence length="93" mass="10750">MGRSLKKGPFVDEHLMKKVEAQANDEKKKVIKTWSRRSTIFPSFIGYTIAVYDGRKHVPVYIQEDMVGHKLGEFAPTRTYKGHAADDKKTRRK</sequence>
<name>RS19_STRPN</name>
<reference key="1">
    <citation type="journal article" date="2000" name="Antimicrob. Agents Chemother.">
        <title>Mutations in ribosomal protein L16 conferring reduced susceptibility to evernimicin (SCH27899): implications for mechanism of action.</title>
        <authorList>
            <person name="Adrian P.V."/>
            <person name="Zhao W."/>
            <person name="Black T.A."/>
            <person name="Shaw K.J."/>
            <person name="Hare R.S."/>
            <person name="Klugman K.P."/>
        </authorList>
    </citation>
    <scope>NUCLEOTIDE SEQUENCE [GENOMIC DNA]</scope>
    <source>
        <strain>SP#5</strain>
        <strain>ZR1</strain>
    </source>
</reference>
<reference key="2">
    <citation type="journal article" date="2001" name="Science">
        <title>Complete genome sequence of a virulent isolate of Streptococcus pneumoniae.</title>
        <authorList>
            <person name="Tettelin H."/>
            <person name="Nelson K.E."/>
            <person name="Paulsen I.T."/>
            <person name="Eisen J.A."/>
            <person name="Read T.D."/>
            <person name="Peterson S.N."/>
            <person name="Heidelberg J.F."/>
            <person name="DeBoy R.T."/>
            <person name="Haft D.H."/>
            <person name="Dodson R.J."/>
            <person name="Durkin A.S."/>
            <person name="Gwinn M.L."/>
            <person name="Kolonay J.F."/>
            <person name="Nelson W.C."/>
            <person name="Peterson J.D."/>
            <person name="Umayam L.A."/>
            <person name="White O."/>
            <person name="Salzberg S.L."/>
            <person name="Lewis M.R."/>
            <person name="Radune D."/>
            <person name="Holtzapple E.K."/>
            <person name="Khouri H.M."/>
            <person name="Wolf A.M."/>
            <person name="Utterback T.R."/>
            <person name="Hansen C.L."/>
            <person name="McDonald L.A."/>
            <person name="Feldblyum T.V."/>
            <person name="Angiuoli S.V."/>
            <person name="Dickinson T."/>
            <person name="Hickey E.K."/>
            <person name="Holt I.E."/>
            <person name="Loftus B.J."/>
            <person name="Yang F."/>
            <person name="Smith H.O."/>
            <person name="Venter J.C."/>
            <person name="Dougherty B.A."/>
            <person name="Morrison D.A."/>
            <person name="Hollingshead S.K."/>
            <person name="Fraser C.M."/>
        </authorList>
    </citation>
    <scope>NUCLEOTIDE SEQUENCE [LARGE SCALE GENOMIC DNA]</scope>
    <source>
        <strain>ATCC BAA-334 / TIGR4</strain>
    </source>
</reference>
<accession>P0A4B5</accession>
<accession>Q9WW12</accession>
<gene>
    <name type="primary">rpsS</name>
    <name type="ordered locus">SP_0213</name>
</gene>
<organism>
    <name type="scientific">Streptococcus pneumoniae serotype 4 (strain ATCC BAA-334 / TIGR4)</name>
    <dbReference type="NCBI Taxonomy" id="170187"/>
    <lineage>
        <taxon>Bacteria</taxon>
        <taxon>Bacillati</taxon>
        <taxon>Bacillota</taxon>
        <taxon>Bacilli</taxon>
        <taxon>Lactobacillales</taxon>
        <taxon>Streptococcaceae</taxon>
        <taxon>Streptococcus</taxon>
    </lineage>
</organism>
<proteinExistence type="inferred from homology"/>
<evidence type="ECO:0000250" key="1"/>
<evidence type="ECO:0000305" key="2"/>
<comment type="function">
    <text evidence="1">Protein S19 forms a complex with S13 that binds strongly to the 16S ribosomal RNA.</text>
</comment>
<comment type="similarity">
    <text evidence="2">Belongs to the universal ribosomal protein uS19 family.</text>
</comment>